<reference key="1">
    <citation type="journal article" date="2008" name="BMC Genomics">
        <title>Comparative genomic analysis of the gut bacterium Bifidobacterium longum reveals loci susceptible to deletion during pure culture growth.</title>
        <authorList>
            <person name="Lee J.H."/>
            <person name="Karamychev V.N."/>
            <person name="Kozyavkin S.A."/>
            <person name="Mills D."/>
            <person name="Pavlov A.R."/>
            <person name="Pavlova N.V."/>
            <person name="Polouchine N.N."/>
            <person name="Richardson P.M."/>
            <person name="Shakhova V.V."/>
            <person name="Slesarev A.I."/>
            <person name="Weimer B."/>
            <person name="O'Sullivan D.J."/>
        </authorList>
    </citation>
    <scope>NUCLEOTIDE SEQUENCE [LARGE SCALE GENOMIC DNA]</scope>
    <source>
        <strain>DJO10A</strain>
    </source>
</reference>
<protein>
    <recommendedName>
        <fullName evidence="1">Cell division protein SepF</fullName>
    </recommendedName>
</protein>
<keyword id="KW-0131">Cell cycle</keyword>
<keyword id="KW-0132">Cell division</keyword>
<keyword id="KW-0963">Cytoplasm</keyword>
<keyword id="KW-0717">Septation</keyword>
<evidence type="ECO:0000255" key="1">
    <source>
        <dbReference type="HAMAP-Rule" id="MF_01197"/>
    </source>
</evidence>
<evidence type="ECO:0000256" key="2">
    <source>
        <dbReference type="SAM" id="MobiDB-lite"/>
    </source>
</evidence>
<comment type="function">
    <text evidence="1">Cell division protein that is part of the divisome complex and is recruited early to the Z-ring. Probably stimulates Z-ring formation, perhaps through the cross-linking of FtsZ protofilaments. Its function overlaps with FtsA.</text>
</comment>
<comment type="subunit">
    <text evidence="1">Homodimer. Interacts with FtsZ.</text>
</comment>
<comment type="subcellular location">
    <subcellularLocation>
        <location evidence="1">Cytoplasm</location>
    </subcellularLocation>
    <text evidence="1">Localizes to the division site, in a FtsZ-dependent manner.</text>
</comment>
<comment type="similarity">
    <text evidence="1">Belongs to the SepF family.</text>
</comment>
<dbReference type="EMBL" id="CP000605">
    <property type="protein sequence ID" value="ACD97583.1"/>
    <property type="molecule type" value="Genomic_DNA"/>
</dbReference>
<dbReference type="RefSeq" id="WP_007053320.1">
    <property type="nucleotide sequence ID" value="NZ_AABM02000032.1"/>
</dbReference>
<dbReference type="SMR" id="B3DQ84"/>
<dbReference type="KEGG" id="blj:BLD_0137"/>
<dbReference type="HOGENOM" id="CLU_078499_0_2_11"/>
<dbReference type="Proteomes" id="UP000002419">
    <property type="component" value="Chromosome"/>
</dbReference>
<dbReference type="GO" id="GO:0005737">
    <property type="term" value="C:cytoplasm"/>
    <property type="evidence" value="ECO:0007669"/>
    <property type="project" value="UniProtKB-SubCell"/>
</dbReference>
<dbReference type="GO" id="GO:0000917">
    <property type="term" value="P:division septum assembly"/>
    <property type="evidence" value="ECO:0007669"/>
    <property type="project" value="UniProtKB-KW"/>
</dbReference>
<dbReference type="GO" id="GO:0043093">
    <property type="term" value="P:FtsZ-dependent cytokinesis"/>
    <property type="evidence" value="ECO:0007669"/>
    <property type="project" value="UniProtKB-UniRule"/>
</dbReference>
<dbReference type="Gene3D" id="3.30.110.150">
    <property type="entry name" value="SepF-like protein"/>
    <property type="match status" value="1"/>
</dbReference>
<dbReference type="HAMAP" id="MF_01197">
    <property type="entry name" value="SepF"/>
    <property type="match status" value="1"/>
</dbReference>
<dbReference type="InterPro" id="IPR023052">
    <property type="entry name" value="Cell_div_SepF"/>
</dbReference>
<dbReference type="InterPro" id="IPR007561">
    <property type="entry name" value="Cell_div_SepF/SepF-rel"/>
</dbReference>
<dbReference type="InterPro" id="IPR038594">
    <property type="entry name" value="SepF-like_sf"/>
</dbReference>
<dbReference type="PANTHER" id="PTHR35798">
    <property type="entry name" value="CELL DIVISION PROTEIN SEPF"/>
    <property type="match status" value="1"/>
</dbReference>
<dbReference type="PANTHER" id="PTHR35798:SF1">
    <property type="entry name" value="CELL DIVISION PROTEIN SEPF"/>
    <property type="match status" value="1"/>
</dbReference>
<dbReference type="Pfam" id="PF04472">
    <property type="entry name" value="SepF"/>
    <property type="match status" value="1"/>
</dbReference>
<sequence>MAGFMKNAMSYLGMSDVVDDEDDYIEEDEEQKPASKSAFDSDHTVTPLASTTAPAASSTTKPFPGGRVNRITTIHPKSYEDAQLVGRALRDGVPVVLNLTGVAEAVAYRIVDFSAGVVFGVRGSLERVTPRVFLLSPAQVNIKVEEPTKPASAHDLFAD</sequence>
<name>SEPF_BIFLD</name>
<gene>
    <name evidence="1" type="primary">sepF</name>
    <name type="ordered locus">BLD_0137</name>
</gene>
<feature type="chain" id="PRO_1000138463" description="Cell division protein SepF">
    <location>
        <begin position="1"/>
        <end position="159"/>
    </location>
</feature>
<feature type="region of interest" description="Disordered" evidence="2">
    <location>
        <begin position="23"/>
        <end position="69"/>
    </location>
</feature>
<feature type="compositionally biased region" description="Low complexity" evidence="2">
    <location>
        <begin position="44"/>
        <end position="64"/>
    </location>
</feature>
<proteinExistence type="inferred from homology"/>
<accession>B3DQ84</accession>
<organism>
    <name type="scientific">Bifidobacterium longum (strain DJO10A)</name>
    <dbReference type="NCBI Taxonomy" id="205913"/>
    <lineage>
        <taxon>Bacteria</taxon>
        <taxon>Bacillati</taxon>
        <taxon>Actinomycetota</taxon>
        <taxon>Actinomycetes</taxon>
        <taxon>Bifidobacteriales</taxon>
        <taxon>Bifidobacteriaceae</taxon>
        <taxon>Bifidobacterium</taxon>
    </lineage>
</organism>